<reference key="1">
    <citation type="journal article" date="2009" name="Stand. Genomic Sci.">
        <title>Complete genome sequence of Methanoculleus marisnigri Romesser et al. 1981 type strain JR1.</title>
        <authorList>
            <person name="Anderson I.J."/>
            <person name="Sieprawska-Lupa M."/>
            <person name="Lapidus A."/>
            <person name="Nolan M."/>
            <person name="Copeland A."/>
            <person name="Glavina Del Rio T."/>
            <person name="Tice H."/>
            <person name="Dalin E."/>
            <person name="Barry K."/>
            <person name="Saunders E."/>
            <person name="Han C."/>
            <person name="Brettin T."/>
            <person name="Detter J.C."/>
            <person name="Bruce D."/>
            <person name="Mikhailova N."/>
            <person name="Pitluck S."/>
            <person name="Hauser L."/>
            <person name="Land M."/>
            <person name="Lucas S."/>
            <person name="Richardson P."/>
            <person name="Whitman W.B."/>
            <person name="Kyrpides N.C."/>
        </authorList>
    </citation>
    <scope>NUCLEOTIDE SEQUENCE [LARGE SCALE GENOMIC DNA]</scope>
    <source>
        <strain>ATCC 35101 / DSM 1498 / JR1</strain>
    </source>
</reference>
<gene>
    <name evidence="1" type="primary">pyrI</name>
    <name type="ordered locus">Memar_1690</name>
</gene>
<organism>
    <name type="scientific">Methanoculleus marisnigri (strain ATCC 35101 / DSM 1498 / JR1)</name>
    <dbReference type="NCBI Taxonomy" id="368407"/>
    <lineage>
        <taxon>Archaea</taxon>
        <taxon>Methanobacteriati</taxon>
        <taxon>Methanobacteriota</taxon>
        <taxon>Stenosarchaea group</taxon>
        <taxon>Methanomicrobia</taxon>
        <taxon>Methanomicrobiales</taxon>
        <taxon>Methanomicrobiaceae</taxon>
        <taxon>Methanoculleus</taxon>
    </lineage>
</organism>
<sequence>MSAKDPSRGLLVSPIKNGTVIDHITAGEALNVLRILGITGSTRECLSIATNVESKRMGKKDIVKIENRELRTEEVDRIALLAPQAKINIIRNYKVVEKKGVEIPEVIRGVVRCPNPGCITNTDEPVASTFEVLDKGLHCLYCDWLIKDDIANHII</sequence>
<accession>A3CW67</accession>
<proteinExistence type="inferred from homology"/>
<name>PYRI_METMJ</name>
<keyword id="KW-0479">Metal-binding</keyword>
<keyword id="KW-0665">Pyrimidine biosynthesis</keyword>
<keyword id="KW-0862">Zinc</keyword>
<feature type="chain" id="PRO_0000321504" description="Aspartate carbamoyltransferase regulatory chain">
    <location>
        <begin position="1"/>
        <end position="155"/>
    </location>
</feature>
<feature type="binding site" evidence="1">
    <location>
        <position position="113"/>
    </location>
    <ligand>
        <name>Zn(2+)</name>
        <dbReference type="ChEBI" id="CHEBI:29105"/>
    </ligand>
</feature>
<feature type="binding site" evidence="1">
    <location>
        <position position="118"/>
    </location>
    <ligand>
        <name>Zn(2+)</name>
        <dbReference type="ChEBI" id="CHEBI:29105"/>
    </ligand>
</feature>
<feature type="binding site" evidence="1">
    <location>
        <position position="139"/>
    </location>
    <ligand>
        <name>Zn(2+)</name>
        <dbReference type="ChEBI" id="CHEBI:29105"/>
    </ligand>
</feature>
<feature type="binding site" evidence="1">
    <location>
        <position position="142"/>
    </location>
    <ligand>
        <name>Zn(2+)</name>
        <dbReference type="ChEBI" id="CHEBI:29105"/>
    </ligand>
</feature>
<evidence type="ECO:0000255" key="1">
    <source>
        <dbReference type="HAMAP-Rule" id="MF_00002"/>
    </source>
</evidence>
<comment type="function">
    <text evidence="1">Involved in allosteric regulation of aspartate carbamoyltransferase.</text>
</comment>
<comment type="cofactor">
    <cofactor evidence="1">
        <name>Zn(2+)</name>
        <dbReference type="ChEBI" id="CHEBI:29105"/>
    </cofactor>
    <text evidence="1">Binds 1 zinc ion per subunit.</text>
</comment>
<comment type="subunit">
    <text evidence="1">Contains catalytic and regulatory chains.</text>
</comment>
<comment type="similarity">
    <text evidence="1">Belongs to the PyrI family.</text>
</comment>
<dbReference type="EMBL" id="CP000562">
    <property type="protein sequence ID" value="ABN57617.1"/>
    <property type="molecule type" value="Genomic_DNA"/>
</dbReference>
<dbReference type="RefSeq" id="WP_011844528.1">
    <property type="nucleotide sequence ID" value="NC_009051.1"/>
</dbReference>
<dbReference type="SMR" id="A3CW67"/>
<dbReference type="STRING" id="368407.Memar_1690"/>
<dbReference type="GeneID" id="4848393"/>
<dbReference type="GeneID" id="76729760"/>
<dbReference type="KEGG" id="mem:Memar_1690"/>
<dbReference type="eggNOG" id="arCOG04229">
    <property type="taxonomic scope" value="Archaea"/>
</dbReference>
<dbReference type="HOGENOM" id="CLU_128576_0_0_2"/>
<dbReference type="OrthoDB" id="7000at2157"/>
<dbReference type="Proteomes" id="UP000002146">
    <property type="component" value="Chromosome"/>
</dbReference>
<dbReference type="GO" id="GO:0009347">
    <property type="term" value="C:aspartate carbamoyltransferase complex"/>
    <property type="evidence" value="ECO:0007669"/>
    <property type="project" value="InterPro"/>
</dbReference>
<dbReference type="GO" id="GO:0046872">
    <property type="term" value="F:metal ion binding"/>
    <property type="evidence" value="ECO:0007669"/>
    <property type="project" value="UniProtKB-KW"/>
</dbReference>
<dbReference type="GO" id="GO:0006207">
    <property type="term" value="P:'de novo' pyrimidine nucleobase biosynthetic process"/>
    <property type="evidence" value="ECO:0007669"/>
    <property type="project" value="InterPro"/>
</dbReference>
<dbReference type="GO" id="GO:0006221">
    <property type="term" value="P:pyrimidine nucleotide biosynthetic process"/>
    <property type="evidence" value="ECO:0007669"/>
    <property type="project" value="UniProtKB-UniRule"/>
</dbReference>
<dbReference type="Gene3D" id="2.30.30.20">
    <property type="entry name" value="Aspartate carbamoyltransferase regulatory subunit, C-terminal domain"/>
    <property type="match status" value="1"/>
</dbReference>
<dbReference type="Gene3D" id="3.30.70.140">
    <property type="entry name" value="Aspartate carbamoyltransferase regulatory subunit, N-terminal domain"/>
    <property type="match status" value="1"/>
</dbReference>
<dbReference type="HAMAP" id="MF_00002">
    <property type="entry name" value="Asp_carb_tr_reg"/>
    <property type="match status" value="1"/>
</dbReference>
<dbReference type="InterPro" id="IPR020545">
    <property type="entry name" value="Asp_carbamoyltransf_reg_N"/>
</dbReference>
<dbReference type="InterPro" id="IPR002801">
    <property type="entry name" value="Asp_carbamoylTrfase_reg"/>
</dbReference>
<dbReference type="InterPro" id="IPR020542">
    <property type="entry name" value="Asp_carbamoyltrfase_reg_C"/>
</dbReference>
<dbReference type="InterPro" id="IPR036792">
    <property type="entry name" value="Asp_carbatrfase_reg_C_sf"/>
</dbReference>
<dbReference type="InterPro" id="IPR036793">
    <property type="entry name" value="Asp_carbatrfase_reg_N_sf"/>
</dbReference>
<dbReference type="NCBIfam" id="TIGR00240">
    <property type="entry name" value="ATCase_reg"/>
    <property type="match status" value="1"/>
</dbReference>
<dbReference type="PANTHER" id="PTHR35805">
    <property type="entry name" value="ASPARTATE CARBAMOYLTRANSFERASE REGULATORY CHAIN"/>
    <property type="match status" value="1"/>
</dbReference>
<dbReference type="PANTHER" id="PTHR35805:SF1">
    <property type="entry name" value="ASPARTATE CARBAMOYLTRANSFERASE REGULATORY CHAIN"/>
    <property type="match status" value="1"/>
</dbReference>
<dbReference type="Pfam" id="PF01948">
    <property type="entry name" value="PyrI"/>
    <property type="match status" value="1"/>
</dbReference>
<dbReference type="Pfam" id="PF02748">
    <property type="entry name" value="PyrI_C"/>
    <property type="match status" value="1"/>
</dbReference>
<dbReference type="SUPFAM" id="SSF57825">
    <property type="entry name" value="Aspartate carbamoyltransferase, Regulatory-chain, C-terminal domain"/>
    <property type="match status" value="1"/>
</dbReference>
<dbReference type="SUPFAM" id="SSF54893">
    <property type="entry name" value="Aspartate carbamoyltransferase, Regulatory-chain, N-terminal domain"/>
    <property type="match status" value="1"/>
</dbReference>
<protein>
    <recommendedName>
        <fullName evidence="1">Aspartate carbamoyltransferase regulatory chain</fullName>
    </recommendedName>
</protein>